<reference key="1">
    <citation type="journal article" date="2006" name="Genomics">
        <title>Diversity and evolution of conotoxins based on gene expression profiling of Conus litteratus.</title>
        <authorList>
            <person name="Pi C."/>
            <person name="Liu J."/>
            <person name="Peng C."/>
            <person name="Liu Y."/>
            <person name="Jiang X."/>
            <person name="Zhao Y."/>
            <person name="Tang S."/>
            <person name="Wang L."/>
            <person name="Dong M."/>
            <person name="Chen S."/>
            <person name="Xu A."/>
        </authorList>
    </citation>
    <scope>NUCLEOTIDE SEQUENCE [MRNA]</scope>
    <source>
        <tissue>Venom duct</tissue>
    </source>
</reference>
<keyword id="KW-0165">Cleavage on pair of basic residues</keyword>
<keyword id="KW-1015">Disulfide bond</keyword>
<keyword id="KW-0964">Secreted</keyword>
<keyword id="KW-0732">Signal</keyword>
<keyword id="KW-0800">Toxin</keyword>
<organism>
    <name type="scientific">Conus litteratus</name>
    <name type="common">Lettered cone</name>
    <dbReference type="NCBI Taxonomy" id="89445"/>
    <lineage>
        <taxon>Eukaryota</taxon>
        <taxon>Metazoa</taxon>
        <taxon>Spiralia</taxon>
        <taxon>Lophotrochozoa</taxon>
        <taxon>Mollusca</taxon>
        <taxon>Gastropoda</taxon>
        <taxon>Caenogastropoda</taxon>
        <taxon>Neogastropoda</taxon>
        <taxon>Conoidea</taxon>
        <taxon>Conidae</taxon>
        <taxon>Conus</taxon>
        <taxon>Elisaconus</taxon>
    </lineage>
</organism>
<name>CM33_CONLT</name>
<evidence type="ECO:0000250" key="1"/>
<evidence type="ECO:0000250" key="2">
    <source>
        <dbReference type="UniProtKB" id="Q5EHP3"/>
    </source>
</evidence>
<evidence type="ECO:0000255" key="3"/>
<evidence type="ECO:0000305" key="4"/>
<evidence type="ECO:0000305" key="5">
    <source>
    </source>
</evidence>
<feature type="signal peptide" evidence="3">
    <location>
        <begin position="1"/>
        <end position="24"/>
    </location>
</feature>
<feature type="propeptide" id="PRO_0000315529" evidence="1">
    <location>
        <begin position="25"/>
        <end position="53"/>
    </location>
</feature>
<feature type="peptide" id="PRO_0000315530" description="Conotoxin Lt3.3">
    <location>
        <begin position="56"/>
        <end position="69"/>
    </location>
</feature>
<feature type="disulfide bond" evidence="2">
    <location>
        <begin position="56"/>
        <end position="68"/>
    </location>
</feature>
<feature type="disulfide bond" evidence="2">
    <location>
        <begin position="57"/>
        <end position="66"/>
    </location>
</feature>
<feature type="disulfide bond" evidence="2">
    <location>
        <begin position="62"/>
        <end position="69"/>
    </location>
</feature>
<dbReference type="EMBL" id="DQ345379">
    <property type="protein sequence ID" value="ABC74987.1"/>
    <property type="molecule type" value="mRNA"/>
</dbReference>
<dbReference type="ConoServer" id="1165">
    <property type="toxin name" value="LtIIIC precursor"/>
</dbReference>
<dbReference type="GO" id="GO:0005576">
    <property type="term" value="C:extracellular region"/>
    <property type="evidence" value="ECO:0007669"/>
    <property type="project" value="UniProtKB-SubCell"/>
</dbReference>
<dbReference type="GO" id="GO:0008200">
    <property type="term" value="F:ion channel inhibitor activity"/>
    <property type="evidence" value="ECO:0007669"/>
    <property type="project" value="InterPro"/>
</dbReference>
<dbReference type="GO" id="GO:0090729">
    <property type="term" value="F:toxin activity"/>
    <property type="evidence" value="ECO:0007669"/>
    <property type="project" value="UniProtKB-KW"/>
</dbReference>
<dbReference type="InterPro" id="IPR004214">
    <property type="entry name" value="Conotoxin"/>
</dbReference>
<dbReference type="Pfam" id="PF02950">
    <property type="entry name" value="Conotoxin"/>
    <property type="match status" value="1"/>
</dbReference>
<protein>
    <recommendedName>
        <fullName>Conotoxin Lt3.3</fullName>
    </recommendedName>
    <alternativeName>
        <fullName>Lt3c</fullName>
    </alternativeName>
</protein>
<sequence>MLKIGVVLFTLLVLFPLATLQLDADQPVERYAENKQDLNPNERMKMIMSALGQRRCCISPACHEECYCC</sequence>
<proteinExistence type="inferred from homology"/>
<comment type="subcellular location">
    <subcellularLocation>
        <location evidence="4">Secreted</location>
    </subcellularLocation>
</comment>
<comment type="tissue specificity">
    <text evidence="5">Expressed by the venom duct.</text>
</comment>
<comment type="domain">
    <text evidence="4">The cysteine framework is III (CC-C-C-CC). Classified in the M-1 branch, since 1 residue stands between the fourth and the fifth cysteine residues.</text>
</comment>
<comment type="similarity">
    <text evidence="4">Belongs to the conotoxin M superfamily.</text>
</comment>
<accession>Q2I2Q3</accession>